<proteinExistence type="inferred from homology"/>
<comment type="function">
    <text evidence="1">Topoisomerase IV is essential for chromosome segregation. It relaxes supercoiled DNA. Performs the decatenation events required during the replication of a circular DNA molecule (By similarity).</text>
</comment>
<comment type="catalytic activity">
    <reaction evidence="2">
        <text>ATP-dependent breakage, passage and rejoining of double-stranded DNA.</text>
        <dbReference type="EC" id="5.6.2.2"/>
    </reaction>
</comment>
<comment type="subunit">
    <text evidence="1">Heterotetramer composed of ParC and ParE.</text>
</comment>
<comment type="subcellular location">
    <subcellularLocation>
        <location evidence="1">Cell membrane</location>
        <topology evidence="1">Peripheral membrane protein</topology>
    </subcellularLocation>
</comment>
<comment type="similarity">
    <text evidence="3">Belongs to the type II topoisomerase GyrA/ParC subunit family.</text>
</comment>
<evidence type="ECO:0000250" key="1"/>
<evidence type="ECO:0000255" key="2">
    <source>
        <dbReference type="PROSITE-ProRule" id="PRU01384"/>
    </source>
</evidence>
<evidence type="ECO:0000305" key="3"/>
<name>PARC_BORBU</name>
<organism>
    <name type="scientific">Borreliella burgdorferi (strain ATCC 35210 / DSM 4680 / CIP 102532 / B31)</name>
    <name type="common">Borrelia burgdorferi</name>
    <dbReference type="NCBI Taxonomy" id="224326"/>
    <lineage>
        <taxon>Bacteria</taxon>
        <taxon>Pseudomonadati</taxon>
        <taxon>Spirochaetota</taxon>
        <taxon>Spirochaetia</taxon>
        <taxon>Spirochaetales</taxon>
        <taxon>Borreliaceae</taxon>
        <taxon>Borreliella</taxon>
    </lineage>
</organism>
<dbReference type="EC" id="5.6.2.2" evidence="2"/>
<dbReference type="EMBL" id="AE000783">
    <property type="protein sequence ID" value="AAC66419.1"/>
    <property type="molecule type" value="Genomic_DNA"/>
</dbReference>
<dbReference type="PIR" id="C70104">
    <property type="entry name" value="C70104"/>
</dbReference>
<dbReference type="RefSeq" id="NP_212169.1">
    <property type="nucleotide sequence ID" value="NC_001318.1"/>
</dbReference>
<dbReference type="RefSeq" id="WP_002656217.1">
    <property type="nucleotide sequence ID" value="NC_001318.1"/>
</dbReference>
<dbReference type="SMR" id="O51066"/>
<dbReference type="STRING" id="224326.BB_0035"/>
<dbReference type="PaxDb" id="224326-BB_0035"/>
<dbReference type="EnsemblBacteria" id="AAC66419">
    <property type="protein sequence ID" value="AAC66419"/>
    <property type="gene ID" value="BB_0035"/>
</dbReference>
<dbReference type="KEGG" id="bbu:BB_0035"/>
<dbReference type="PATRIC" id="fig|224326.49.peg.434"/>
<dbReference type="HOGENOM" id="CLU_015760_0_0_12"/>
<dbReference type="OrthoDB" id="9806486at2"/>
<dbReference type="Proteomes" id="UP000001807">
    <property type="component" value="Chromosome"/>
</dbReference>
<dbReference type="GO" id="GO:0005737">
    <property type="term" value="C:cytoplasm"/>
    <property type="evidence" value="ECO:0007669"/>
    <property type="project" value="TreeGrafter"/>
</dbReference>
<dbReference type="GO" id="GO:0009330">
    <property type="term" value="C:DNA topoisomerase type II (double strand cut, ATP-hydrolyzing) complex"/>
    <property type="evidence" value="ECO:0007669"/>
    <property type="project" value="TreeGrafter"/>
</dbReference>
<dbReference type="GO" id="GO:0005886">
    <property type="term" value="C:plasma membrane"/>
    <property type="evidence" value="ECO:0007669"/>
    <property type="project" value="UniProtKB-SubCell"/>
</dbReference>
<dbReference type="GO" id="GO:0005524">
    <property type="term" value="F:ATP binding"/>
    <property type="evidence" value="ECO:0007669"/>
    <property type="project" value="InterPro"/>
</dbReference>
<dbReference type="GO" id="GO:0003677">
    <property type="term" value="F:DNA binding"/>
    <property type="evidence" value="ECO:0007669"/>
    <property type="project" value="UniProtKB-KW"/>
</dbReference>
<dbReference type="GO" id="GO:0003918">
    <property type="term" value="F:DNA topoisomerase type II (double strand cut, ATP-hydrolyzing) activity"/>
    <property type="evidence" value="ECO:0007669"/>
    <property type="project" value="UniProtKB-EC"/>
</dbReference>
<dbReference type="GO" id="GO:0006265">
    <property type="term" value="P:DNA topological change"/>
    <property type="evidence" value="ECO:0007669"/>
    <property type="project" value="InterPro"/>
</dbReference>
<dbReference type="Gene3D" id="3.30.1360.40">
    <property type="match status" value="1"/>
</dbReference>
<dbReference type="Gene3D" id="3.90.199.10">
    <property type="entry name" value="Topoisomerase II, domain 5"/>
    <property type="match status" value="1"/>
</dbReference>
<dbReference type="Gene3D" id="1.10.268.10">
    <property type="entry name" value="Topoisomerase, domain 3"/>
    <property type="match status" value="1"/>
</dbReference>
<dbReference type="InterPro" id="IPR013760">
    <property type="entry name" value="Topo_IIA-like_dom_sf"/>
</dbReference>
<dbReference type="InterPro" id="IPR013758">
    <property type="entry name" value="Topo_IIA_A/C_ab"/>
</dbReference>
<dbReference type="InterPro" id="IPR013757">
    <property type="entry name" value="Topo_IIA_A_a_sf"/>
</dbReference>
<dbReference type="InterPro" id="IPR002205">
    <property type="entry name" value="Topo_IIA_dom_A"/>
</dbReference>
<dbReference type="InterPro" id="IPR050220">
    <property type="entry name" value="Type_II_DNA_Topoisomerases"/>
</dbReference>
<dbReference type="NCBIfam" id="NF007209">
    <property type="entry name" value="PRK09631.1"/>
    <property type="match status" value="1"/>
</dbReference>
<dbReference type="PANTHER" id="PTHR43493:SF5">
    <property type="entry name" value="DNA GYRASE SUBUNIT A, CHLOROPLASTIC_MITOCHONDRIAL"/>
    <property type="match status" value="1"/>
</dbReference>
<dbReference type="PANTHER" id="PTHR43493">
    <property type="entry name" value="DNA GYRASE/TOPOISOMERASE SUBUNIT A"/>
    <property type="match status" value="1"/>
</dbReference>
<dbReference type="Pfam" id="PF00521">
    <property type="entry name" value="DNA_topoisoIV"/>
    <property type="match status" value="1"/>
</dbReference>
<dbReference type="SMART" id="SM00434">
    <property type="entry name" value="TOP4c"/>
    <property type="match status" value="1"/>
</dbReference>
<dbReference type="SUPFAM" id="SSF56719">
    <property type="entry name" value="Type II DNA topoisomerase"/>
    <property type="match status" value="1"/>
</dbReference>
<dbReference type="PROSITE" id="PS52040">
    <property type="entry name" value="TOPO_IIA"/>
    <property type="match status" value="1"/>
</dbReference>
<feature type="chain" id="PRO_0000145395" description="DNA topoisomerase 4 subunit A">
    <location>
        <begin position="1"/>
        <end position="626"/>
    </location>
</feature>
<feature type="domain" description="Topo IIA-type catalytic" evidence="2">
    <location>
        <begin position="24"/>
        <end position="439"/>
    </location>
</feature>
<feature type="active site" description="O-(5'-phospho-DNA)-tyrosine intermediate" evidence="2">
    <location>
        <position position="105"/>
    </location>
</feature>
<feature type="site" description="Interaction with DNA" evidence="1">
    <location>
        <position position="32"/>
    </location>
</feature>
<feature type="site" description="Interaction with DNA" evidence="1">
    <location>
        <position position="64"/>
    </location>
</feature>
<feature type="site" description="Interaction with DNA" evidence="1">
    <location>
        <position position="66"/>
    </location>
</feature>
<feature type="site" description="Transition state stabilizer" evidence="1">
    <location>
        <position position="104"/>
    </location>
</feature>
<reference key="1">
    <citation type="journal article" date="1997" name="Nature">
        <title>Genomic sequence of a Lyme disease spirochaete, Borrelia burgdorferi.</title>
        <authorList>
            <person name="Fraser C.M."/>
            <person name="Casjens S."/>
            <person name="Huang W.M."/>
            <person name="Sutton G.G."/>
            <person name="Clayton R.A."/>
            <person name="Lathigra R."/>
            <person name="White O."/>
            <person name="Ketchum K.A."/>
            <person name="Dodson R.J."/>
            <person name="Hickey E.K."/>
            <person name="Gwinn M.L."/>
            <person name="Dougherty B.A."/>
            <person name="Tomb J.-F."/>
            <person name="Fleischmann R.D."/>
            <person name="Richardson D.L."/>
            <person name="Peterson J.D."/>
            <person name="Kerlavage A.R."/>
            <person name="Quackenbush J."/>
            <person name="Salzberg S.L."/>
            <person name="Hanson M."/>
            <person name="van Vugt R."/>
            <person name="Palmer N."/>
            <person name="Adams M.D."/>
            <person name="Gocayne J.D."/>
            <person name="Weidman J.F."/>
            <person name="Utterback T.R."/>
            <person name="Watthey L."/>
            <person name="McDonald L.A."/>
            <person name="Artiach P."/>
            <person name="Bowman C."/>
            <person name="Garland S.A."/>
            <person name="Fujii C."/>
            <person name="Cotton M.D."/>
            <person name="Horst K."/>
            <person name="Roberts K.M."/>
            <person name="Hatch B."/>
            <person name="Smith H.O."/>
            <person name="Venter J.C."/>
        </authorList>
    </citation>
    <scope>NUCLEOTIDE SEQUENCE [LARGE SCALE GENOMIC DNA]</scope>
    <source>
        <strain>ATCC 35210 / DSM 4680 / CIP 102532 / B31</strain>
    </source>
</reference>
<accession>O51066</accession>
<keyword id="KW-1003">Cell membrane</keyword>
<keyword id="KW-0238">DNA-binding</keyword>
<keyword id="KW-0413">Isomerase</keyword>
<keyword id="KW-0472">Membrane</keyword>
<keyword id="KW-1185">Reference proteome</keyword>
<keyword id="KW-0799">Topoisomerase</keyword>
<gene>
    <name type="primary">parC</name>
    <name type="ordered locus">BB_0035</name>
</gene>
<sequence length="626" mass="72042">MDIRTVLKDNFLQYSSYVIKDRAIASVVDGFKPVQRRIIHSLFEMHDGNFHKVANVVGNTMKYHPHGDTSIYEALVNIANKDLFIEKQGNFGNLFTGDPASASRYIECRLTPLAFDVLYSKEITIYESSYDGRNNEPLLYPAKIPVILIQGSEGIAVGMAAKILPHNFNEILNAVKSELLGESYDIYPDFPTGGIVDVNEYADGNGKVLVRAKIETIDEKTIVIRELPFGETTESLISSIEKAIRKNYIKVSSINDFTAENVAIELSLPRGVYASEVIEKLYHYTNCQISISVNLLLLSERYPVVYTIKDLIKFHAAHLQKILKMELELQKSKILEKIFYKTLEQIFIEKKIYKLLETISKEENILSIILSEVLRHKESFSREVLKEDVENLLKIPIRKISLFDIDKNSKDIKILNKELKSINSNISSIRGYSINFIDLLLAKYSKEHQRKTKISLIKSKNVKEIATKNMKVYLNLAEGFAGTSLFDGEFIGNASYYDKILVFRENSYVLKNIEDKTFIDKKNVCALVYDINNSKEQIFSIIYFNRLDNFYYVKRFKIDKFITDKVYEFLGENDEFVDFSLNPEFVEFSTNKDIVKRIEIDNFMVKSRSSIGKRISSNNLKKVKFK</sequence>
<protein>
    <recommendedName>
        <fullName>DNA topoisomerase 4 subunit A</fullName>
        <ecNumber evidence="2">5.6.2.2</ecNumber>
    </recommendedName>
    <alternativeName>
        <fullName>Topoisomerase IV subunit A</fullName>
    </alternativeName>
</protein>